<evidence type="ECO:0000250" key="1">
    <source>
        <dbReference type="UniProtKB" id="Q9X112"/>
    </source>
</evidence>
<evidence type="ECO:0000255" key="2">
    <source>
        <dbReference type="HAMAP-Rule" id="MF_00288"/>
    </source>
</evidence>
<evidence type="ECO:0000269" key="3">
    <source>
    </source>
</evidence>
<evidence type="ECO:0000305" key="4"/>
<organism>
    <name type="scientific">Methanothermobacter marburgensis (strain ATCC BAA-927 / DSM 2133 / JCM 14651 / NBRC 100331 / OCM 82 / Marburg)</name>
    <name type="common">Methanobacterium thermoautotrophicum</name>
    <dbReference type="NCBI Taxonomy" id="79929"/>
    <lineage>
        <taxon>Archaea</taxon>
        <taxon>Methanobacteriati</taxon>
        <taxon>Methanobacteriota</taxon>
        <taxon>Methanomada group</taxon>
        <taxon>Methanobacteria</taxon>
        <taxon>Methanobacteriales</taxon>
        <taxon>Methanobacteriaceae</taxon>
        <taxon>Methanothermobacter</taxon>
    </lineage>
</organism>
<protein>
    <recommendedName>
        <fullName evidence="2">Methionine synthase</fullName>
        <ecNumber evidence="2">2.1.1.-</ecNumber>
    </recommendedName>
    <alternativeName>
        <fullName>Homocysteine methyltransferase</fullName>
    </alternativeName>
    <alternativeName>
        <fullName>Methylcobalamin:homocysteine methyltransferase</fullName>
    </alternativeName>
</protein>
<accession>P55299</accession>
<accession>D9PX16</accession>
<sequence length="309" mass="33447">MITTVVGSYPATPREPETLRERISSFIGSYDACRPAIETAVRDQVRAGVDIISDGQVRGDMVGHFAEAMGGMMVKDGVSIIFSRITPPAGSIGSDDLIYAIKILRKLTDDESKGVKGIITGPSTMAHASKIEGFYSPQKRERAIMDMADALRVEAEHLQDAGALMIQIDEPFLSTGMVDMGTARRAVKRISGALDVDVSLHVCGDISGVIGELLTFPVDMLDLEFAGRPSNLEVLAEKWRGDKKLGFGCVDTSTEVVESTDTIKNLIERGADIAGEDNLYIDPDCGMRKLPREAAFSKLRNMVKAASEF</sequence>
<reference key="1">
    <citation type="journal article" date="1996" name="Eur. J. Biochem.">
        <title>Primary structure of cyclohydrolase (Mch) from Methanobacterium thermoautotrophicum (strain Marburg) and functional expression of the mch gene in Escherichia coli.</title>
        <authorList>
            <person name="Vaupel M."/>
            <person name="Dietz H."/>
            <person name="Linder D."/>
            <person name="Thauer R.K."/>
        </authorList>
    </citation>
    <scope>NUCLEOTIDE SEQUENCE [GENOMIC DNA]</scope>
    <source>
        <strain>ATCC BAA-927 / DSM 2133 / JCM 14651 / NBRC 100331 / OCM 82 / Marburg</strain>
    </source>
</reference>
<reference key="2">
    <citation type="journal article" date="2010" name="J. Bacteriol.">
        <title>Complete genome sequence of Methanothermobacter marburgensis, a methanoarchaeon model organism.</title>
        <authorList>
            <person name="Liesegang H."/>
            <person name="Kaster A.K."/>
            <person name="Wiezer A."/>
            <person name="Goenrich M."/>
            <person name="Wollherr A."/>
            <person name="Seedorf H."/>
            <person name="Gottschalk G."/>
            <person name="Thauer R.K."/>
        </authorList>
    </citation>
    <scope>NUCLEOTIDE SEQUENCE [LARGE SCALE GENOMIC DNA]</scope>
    <source>
        <strain>ATCC BAA-927 / DSM 2133 / JCM 14651 / NBRC 100331 / OCM 82 / Marburg</strain>
    </source>
</reference>
<reference key="3">
    <citation type="journal article" date="1999" name="Eur. J. Biochem.">
        <title>Methylcobalamin:homocysteine methyltransferase from Methanobacterium thermoautotrophicum. Identification as the metE gene product.</title>
        <authorList>
            <person name="Schroeder I."/>
            <person name="Thauer R.K."/>
        </authorList>
    </citation>
    <scope>PROTEIN SEQUENCE OF 3-24</scope>
    <scope>FUNCTION</scope>
    <scope>CATALYTIC ACTIVITY</scope>
    <scope>SUBSTRATE SPECIFICITY</scope>
    <scope>BIOPHYSICOCHEMICAL PROPERTIES</scope>
    <scope>ACTIVITY REGULATION</scope>
    <source>
        <strain>ATCC BAA-927 / DSM 2133 / JCM 14651 / NBRC 100331 / OCM 82 / Marburg</strain>
    </source>
</reference>
<comment type="function">
    <text evidence="3">Catalyzes the transfer of a methyl group to L-homocysteine resulting in methionine formation. Can use methylcobalamin and methylcobinamide as methyl donors, but methylcobalamin is not considered to be the physiological substrate. It was proposed that, in vivo, a so-far-unidentified enzyme catalyzes methyltransfer from 5-methyltetrahydromethanopterin (5-CH3-H4MPT) to a corrinoid protein, and that the MetE gene product catalyzes the further transfer to L-homocysteine. Is not active with L-cysteine, coenzyme M, coenzyme B, glutathione or dithiothreitol as substrate.</text>
</comment>
<comment type="cofactor">
    <cofactor evidence="1 2">
        <name>Zn(2+)</name>
        <dbReference type="ChEBI" id="CHEBI:29105"/>
    </cofactor>
    <text evidence="1 2">Binds 1 zinc ion per subunit.</text>
</comment>
<comment type="activity regulation">
    <text evidence="3">Is activated by phosphates.</text>
</comment>
<comment type="biophysicochemical properties">
    <kinetics>
        <KM evidence="3">0.1 mM for L-homocysteine</KM>
    </kinetics>
    <phDependence>
        <text evidence="3">Optimum pH is 7.0-8.0.</text>
    </phDependence>
    <temperatureDependence>
        <text evidence="3">Optimum temperature is 65 degrees Celsius. At this temperature, the enzyme is rapidly inactivated.</text>
    </temperatureDependence>
</comment>
<comment type="pathway">
    <text evidence="2">Amino-acid biosynthesis; L-methionine biosynthesis via de novo pathway.</text>
</comment>
<comment type="similarity">
    <text evidence="2 4">Belongs to the archaeal MetE family.</text>
</comment>
<comment type="sequence caution" evidence="4">
    <conflict type="erroneous initiation">
        <sequence resource="EMBL-CDS" id="CAA63062"/>
    </conflict>
    <text>Extended N-terminus.</text>
</comment>
<feature type="chain" id="PRO_0000098686" description="Methionine synthase">
    <location>
        <begin position="1"/>
        <end position="309"/>
    </location>
</feature>
<feature type="binding site" evidence="1 2">
    <location>
        <position position="201"/>
    </location>
    <ligand>
        <name>Zn(2+)</name>
        <dbReference type="ChEBI" id="CHEBI:29105"/>
        <note>catalytic</note>
    </ligand>
</feature>
<feature type="binding site" evidence="1 2">
    <location>
        <position position="203"/>
    </location>
    <ligand>
        <name>Zn(2+)</name>
        <dbReference type="ChEBI" id="CHEBI:29105"/>
        <note>catalytic</note>
    </ligand>
</feature>
<feature type="binding site" evidence="1 2">
    <location>
        <position position="224"/>
    </location>
    <ligand>
        <name>Zn(2+)</name>
        <dbReference type="ChEBI" id="CHEBI:29105"/>
        <note>catalytic</note>
    </ligand>
</feature>
<feature type="binding site" evidence="1 2">
    <location>
        <position position="285"/>
    </location>
    <ligand>
        <name>Zn(2+)</name>
        <dbReference type="ChEBI" id="CHEBI:29105"/>
        <note>catalytic</note>
    </ligand>
</feature>
<feature type="sequence conflict" description="In Ref. 1; CAA63062." evidence="4" ref="1">
    <original>A</original>
    <variation>R</variation>
    <location>
        <position position="100"/>
    </location>
</feature>
<proteinExistence type="evidence at protein level"/>
<name>METE_METTM</name>
<keyword id="KW-0028">Amino-acid biosynthesis</keyword>
<keyword id="KW-0903">Direct protein sequencing</keyword>
<keyword id="KW-0479">Metal-binding</keyword>
<keyword id="KW-0486">Methionine biosynthesis</keyword>
<keyword id="KW-0489">Methyltransferase</keyword>
<keyword id="KW-0808">Transferase</keyword>
<keyword id="KW-0862">Zinc</keyword>
<gene>
    <name evidence="2" type="primary">metE</name>
    <name type="ordered locus">MTBMA_c11710</name>
</gene>
<dbReference type="EC" id="2.1.1.-" evidence="2"/>
<dbReference type="EMBL" id="X92082">
    <property type="protein sequence ID" value="CAA63062.1"/>
    <property type="status" value="ALT_INIT"/>
    <property type="molecule type" value="Genomic_DNA"/>
</dbReference>
<dbReference type="EMBL" id="CP001710">
    <property type="protein sequence ID" value="ADL58764.1"/>
    <property type="molecule type" value="Genomic_DNA"/>
</dbReference>
<dbReference type="PIR" id="S62191">
    <property type="entry name" value="S62191"/>
</dbReference>
<dbReference type="RefSeq" id="WP_013295986.1">
    <property type="nucleotide sequence ID" value="NC_014408.1"/>
</dbReference>
<dbReference type="SMR" id="P55299"/>
<dbReference type="STRING" id="79929.MTBMA_c11710"/>
<dbReference type="PaxDb" id="79929-MTBMA_c11710"/>
<dbReference type="GeneID" id="77399943"/>
<dbReference type="GeneID" id="9704879"/>
<dbReference type="KEGG" id="mmg:MTBMA_c11710"/>
<dbReference type="PATRIC" id="fig|79929.8.peg.1140"/>
<dbReference type="HOGENOM" id="CLU_040013_3_2_2"/>
<dbReference type="OrthoDB" id="17656at2157"/>
<dbReference type="BioCyc" id="MetaCyc:MONOMER-20454"/>
<dbReference type="UniPathway" id="UPA00051"/>
<dbReference type="Proteomes" id="UP000000345">
    <property type="component" value="Chromosome"/>
</dbReference>
<dbReference type="GO" id="GO:0003871">
    <property type="term" value="F:5-methyltetrahydropteroyltriglutamate-homocysteine S-methyltransferase activity"/>
    <property type="evidence" value="ECO:0007669"/>
    <property type="project" value="InterPro"/>
</dbReference>
<dbReference type="GO" id="GO:0008270">
    <property type="term" value="F:zinc ion binding"/>
    <property type="evidence" value="ECO:0007669"/>
    <property type="project" value="InterPro"/>
</dbReference>
<dbReference type="GO" id="GO:0009086">
    <property type="term" value="P:methionine biosynthetic process"/>
    <property type="evidence" value="ECO:0007669"/>
    <property type="project" value="UniProtKB-UniRule"/>
</dbReference>
<dbReference type="GO" id="GO:0032259">
    <property type="term" value="P:methylation"/>
    <property type="evidence" value="ECO:0007669"/>
    <property type="project" value="UniProtKB-KW"/>
</dbReference>
<dbReference type="CDD" id="cd03311">
    <property type="entry name" value="CIMS_C_terminal_like"/>
    <property type="match status" value="1"/>
</dbReference>
<dbReference type="Gene3D" id="3.20.20.210">
    <property type="match status" value="1"/>
</dbReference>
<dbReference type="HAMAP" id="MF_00288">
    <property type="entry name" value="MetE"/>
    <property type="match status" value="1"/>
</dbReference>
<dbReference type="InterPro" id="IPR002629">
    <property type="entry name" value="Met_Synth_C/arc"/>
</dbReference>
<dbReference type="InterPro" id="IPR022921">
    <property type="entry name" value="MetE_arc"/>
</dbReference>
<dbReference type="InterPro" id="IPR038071">
    <property type="entry name" value="UROD/MetE-like_sf"/>
</dbReference>
<dbReference type="NCBIfam" id="NF002119">
    <property type="entry name" value="PRK00957.1"/>
    <property type="match status" value="1"/>
</dbReference>
<dbReference type="PANTHER" id="PTHR30519">
    <property type="entry name" value="5-METHYLTETRAHYDROPTEROYLTRIGLUTAMATE--HOMOCYSTEINE METHYLTRANSFERASE"/>
    <property type="match status" value="1"/>
</dbReference>
<dbReference type="Pfam" id="PF01717">
    <property type="entry name" value="Meth_synt_2"/>
    <property type="match status" value="1"/>
</dbReference>
<dbReference type="SUPFAM" id="SSF51726">
    <property type="entry name" value="UROD/MetE-like"/>
    <property type="match status" value="1"/>
</dbReference>